<gene>
    <name evidence="1" type="primary">araB</name>
    <name type="ordered locus">CKO_03319</name>
</gene>
<accession>A8ALN9</accession>
<name>ARAB_CITK8</name>
<protein>
    <recommendedName>
        <fullName evidence="1">Ribulokinase</fullName>
        <ecNumber evidence="1">2.7.1.16</ecNumber>
    </recommendedName>
</protein>
<reference key="1">
    <citation type="submission" date="2007-08" db="EMBL/GenBank/DDBJ databases">
        <authorList>
            <consortium name="The Citrobacter koseri Genome Sequencing Project"/>
            <person name="McClelland M."/>
            <person name="Sanderson E.K."/>
            <person name="Porwollik S."/>
            <person name="Spieth J."/>
            <person name="Clifton W.S."/>
            <person name="Latreille P."/>
            <person name="Courtney L."/>
            <person name="Wang C."/>
            <person name="Pepin K."/>
            <person name="Bhonagiri V."/>
            <person name="Nash W."/>
            <person name="Johnson M."/>
            <person name="Thiruvilangam P."/>
            <person name="Wilson R."/>
        </authorList>
    </citation>
    <scope>NUCLEOTIDE SEQUENCE [LARGE SCALE GENOMIC DNA]</scope>
    <source>
        <strain>ATCC BAA-895 / CDC 4225-83 / SGSC4696</strain>
    </source>
</reference>
<sequence>MAIAIGLDFGSDSVRALAVDCATGEEIATCVEWYPRWQEGCYCDAPNNQFRHHPRDYIESMEAALKNVLTTLSASQRGEVVGIGVDSTGSTPAPIDVDGHVLALRPEFAENPNAMFVLWKDHTSVEEAEAITRLCHTPGKTDYSRYIGGIYSSEWFWAKILHVTRQDSAVAQAAASWIELCDWVPALLSGTTRPQDIRRGRCSAGHKSLWHESWGGLPPASFFDDLDPIINRHLAWPLFTDTFTADLPVGTLCAEWAQRLGLPESVVISGGAFDCHMGAVGAGAQPNALVKVIGTSTCDILIADKQSVGDRAVKGICGQVDGSVVPDFIGLEAGQSAFGDIYAWFGRILGWPLEQLAAQHPELKDQIAISQKQLLPTLTEAWAKNPSLDHLPVVLDWFNGRRTPNANQRLKGVISDLNLATDAPALFGGLIAATAFGARAIQECFTEQGIAVNNVMALGGIARKNQVIMQACCDVLNRPLQIVASDQCCALGAAIFAAVAAKAHVDIPAAQQKMASAVENTLQPRPEQAQRFEQLYQRYRQWAVSAEQHYLPTATPAPKTPVSQATLTH</sequence>
<comment type="catalytic activity">
    <reaction evidence="1">
        <text>D-ribulose + ATP = D-ribulose 5-phosphate + ADP + H(+)</text>
        <dbReference type="Rhea" id="RHEA:17601"/>
        <dbReference type="ChEBI" id="CHEBI:15378"/>
        <dbReference type="ChEBI" id="CHEBI:17173"/>
        <dbReference type="ChEBI" id="CHEBI:30616"/>
        <dbReference type="ChEBI" id="CHEBI:58121"/>
        <dbReference type="ChEBI" id="CHEBI:456216"/>
        <dbReference type="EC" id="2.7.1.16"/>
    </reaction>
</comment>
<comment type="catalytic activity">
    <reaction evidence="1">
        <text>L-ribulose + ATP = L-ribulose 5-phosphate + ADP + H(+)</text>
        <dbReference type="Rhea" id="RHEA:22072"/>
        <dbReference type="ChEBI" id="CHEBI:15378"/>
        <dbReference type="ChEBI" id="CHEBI:16880"/>
        <dbReference type="ChEBI" id="CHEBI:30616"/>
        <dbReference type="ChEBI" id="CHEBI:58226"/>
        <dbReference type="ChEBI" id="CHEBI:456216"/>
        <dbReference type="EC" id="2.7.1.16"/>
    </reaction>
</comment>
<comment type="pathway">
    <text evidence="1">Carbohydrate degradation; L-arabinose degradation via L-ribulose; D-xylulose 5-phosphate from L-arabinose (bacterial route): step 2/3.</text>
</comment>
<comment type="similarity">
    <text evidence="1">Belongs to the ribulokinase family.</text>
</comment>
<dbReference type="EC" id="2.7.1.16" evidence="1"/>
<dbReference type="EMBL" id="CP000822">
    <property type="protein sequence ID" value="ABV14402.1"/>
    <property type="molecule type" value="Genomic_DNA"/>
</dbReference>
<dbReference type="RefSeq" id="WP_012134105.1">
    <property type="nucleotide sequence ID" value="NC_009792.1"/>
</dbReference>
<dbReference type="SMR" id="A8ALN9"/>
<dbReference type="STRING" id="290338.CKO_03319"/>
<dbReference type="GeneID" id="45137084"/>
<dbReference type="KEGG" id="cko:CKO_03319"/>
<dbReference type="HOGENOM" id="CLU_009281_9_1_6"/>
<dbReference type="OrthoDB" id="9805576at2"/>
<dbReference type="UniPathway" id="UPA00145">
    <property type="reaction ID" value="UER00566"/>
</dbReference>
<dbReference type="Proteomes" id="UP000008148">
    <property type="component" value="Chromosome"/>
</dbReference>
<dbReference type="GO" id="GO:0005737">
    <property type="term" value="C:cytoplasm"/>
    <property type="evidence" value="ECO:0007669"/>
    <property type="project" value="TreeGrafter"/>
</dbReference>
<dbReference type="GO" id="GO:0005524">
    <property type="term" value="F:ATP binding"/>
    <property type="evidence" value="ECO:0007669"/>
    <property type="project" value="UniProtKB-KW"/>
</dbReference>
<dbReference type="GO" id="GO:0019150">
    <property type="term" value="F:D-ribulokinase activity"/>
    <property type="evidence" value="ECO:0007669"/>
    <property type="project" value="RHEA"/>
</dbReference>
<dbReference type="GO" id="GO:0008741">
    <property type="term" value="F:ribulokinase activity"/>
    <property type="evidence" value="ECO:0007669"/>
    <property type="project" value="UniProtKB-UniRule"/>
</dbReference>
<dbReference type="GO" id="GO:0019569">
    <property type="term" value="P:L-arabinose catabolic process to xylulose 5-phosphate"/>
    <property type="evidence" value="ECO:0007669"/>
    <property type="project" value="UniProtKB-UniRule"/>
</dbReference>
<dbReference type="CDD" id="cd07781">
    <property type="entry name" value="ASKHA_NBD_FGGY_L-RBK"/>
    <property type="match status" value="1"/>
</dbReference>
<dbReference type="Gene3D" id="1.20.58.2240">
    <property type="match status" value="1"/>
</dbReference>
<dbReference type="Gene3D" id="3.30.420.40">
    <property type="match status" value="1"/>
</dbReference>
<dbReference type="HAMAP" id="MF_00520">
    <property type="entry name" value="Ribulokinase"/>
    <property type="match status" value="1"/>
</dbReference>
<dbReference type="InterPro" id="IPR043129">
    <property type="entry name" value="ATPase_NBD"/>
</dbReference>
<dbReference type="InterPro" id="IPR018485">
    <property type="entry name" value="FGGY_C"/>
</dbReference>
<dbReference type="InterPro" id="IPR005929">
    <property type="entry name" value="Ribulokinase"/>
</dbReference>
<dbReference type="NCBIfam" id="TIGR01234">
    <property type="entry name" value="L-ribulokinase"/>
    <property type="match status" value="1"/>
</dbReference>
<dbReference type="NCBIfam" id="NF003154">
    <property type="entry name" value="PRK04123.1"/>
    <property type="match status" value="1"/>
</dbReference>
<dbReference type="PANTHER" id="PTHR43435:SF4">
    <property type="entry name" value="FGGY CARBOHYDRATE KINASE DOMAIN-CONTAINING PROTEIN"/>
    <property type="match status" value="1"/>
</dbReference>
<dbReference type="PANTHER" id="PTHR43435">
    <property type="entry name" value="RIBULOKINASE"/>
    <property type="match status" value="1"/>
</dbReference>
<dbReference type="Pfam" id="PF02782">
    <property type="entry name" value="FGGY_C"/>
    <property type="match status" value="1"/>
</dbReference>
<dbReference type="SUPFAM" id="SSF53067">
    <property type="entry name" value="Actin-like ATPase domain"/>
    <property type="match status" value="2"/>
</dbReference>
<proteinExistence type="inferred from homology"/>
<organism>
    <name type="scientific">Citrobacter koseri (strain ATCC BAA-895 / CDC 4225-83 / SGSC4696)</name>
    <dbReference type="NCBI Taxonomy" id="290338"/>
    <lineage>
        <taxon>Bacteria</taxon>
        <taxon>Pseudomonadati</taxon>
        <taxon>Pseudomonadota</taxon>
        <taxon>Gammaproteobacteria</taxon>
        <taxon>Enterobacterales</taxon>
        <taxon>Enterobacteriaceae</taxon>
        <taxon>Citrobacter</taxon>
    </lineage>
</organism>
<keyword id="KW-0054">Arabinose catabolism</keyword>
<keyword id="KW-0067">ATP-binding</keyword>
<keyword id="KW-0119">Carbohydrate metabolism</keyword>
<keyword id="KW-0418">Kinase</keyword>
<keyword id="KW-0547">Nucleotide-binding</keyword>
<keyword id="KW-1185">Reference proteome</keyword>
<keyword id="KW-0808">Transferase</keyword>
<feature type="chain" id="PRO_1000050909" description="Ribulokinase">
    <location>
        <begin position="1"/>
        <end position="569"/>
    </location>
</feature>
<evidence type="ECO:0000255" key="1">
    <source>
        <dbReference type="HAMAP-Rule" id="MF_00520"/>
    </source>
</evidence>